<gene>
    <name evidence="1" type="primary">minE</name>
    <name type="ordered locus">YPN_1553</name>
    <name type="ORF">YP516_1726</name>
</gene>
<keyword id="KW-0131">Cell cycle</keyword>
<keyword id="KW-0132">Cell division</keyword>
<dbReference type="EMBL" id="CP000305">
    <property type="protein sequence ID" value="ABG17883.1"/>
    <property type="molecule type" value="Genomic_DNA"/>
</dbReference>
<dbReference type="EMBL" id="ACNQ01000009">
    <property type="protein sequence ID" value="EEO76994.1"/>
    <property type="molecule type" value="Genomic_DNA"/>
</dbReference>
<dbReference type="RefSeq" id="WP_002211180.1">
    <property type="nucleotide sequence ID" value="NZ_ACNQ01000009.1"/>
</dbReference>
<dbReference type="SMR" id="Q1CJE7"/>
<dbReference type="GeneID" id="97456410"/>
<dbReference type="KEGG" id="ypn:YPN_1553"/>
<dbReference type="HOGENOM" id="CLU_137929_2_2_6"/>
<dbReference type="Proteomes" id="UP000008936">
    <property type="component" value="Chromosome"/>
</dbReference>
<dbReference type="GO" id="GO:0051301">
    <property type="term" value="P:cell division"/>
    <property type="evidence" value="ECO:0007669"/>
    <property type="project" value="UniProtKB-KW"/>
</dbReference>
<dbReference type="GO" id="GO:0032955">
    <property type="term" value="P:regulation of division septum assembly"/>
    <property type="evidence" value="ECO:0007669"/>
    <property type="project" value="InterPro"/>
</dbReference>
<dbReference type="FunFam" id="3.30.1070.10:FF:000001">
    <property type="entry name" value="Cell division topological specificity factor"/>
    <property type="match status" value="1"/>
</dbReference>
<dbReference type="Gene3D" id="3.30.1070.10">
    <property type="entry name" value="Cell division topological specificity factor MinE"/>
    <property type="match status" value="1"/>
</dbReference>
<dbReference type="HAMAP" id="MF_00262">
    <property type="entry name" value="MinE"/>
    <property type="match status" value="1"/>
</dbReference>
<dbReference type="InterPro" id="IPR005527">
    <property type="entry name" value="MinE"/>
</dbReference>
<dbReference type="InterPro" id="IPR036707">
    <property type="entry name" value="MinE_sf"/>
</dbReference>
<dbReference type="NCBIfam" id="TIGR01215">
    <property type="entry name" value="minE"/>
    <property type="match status" value="1"/>
</dbReference>
<dbReference type="NCBIfam" id="NF001422">
    <property type="entry name" value="PRK00296.1"/>
    <property type="match status" value="1"/>
</dbReference>
<dbReference type="Pfam" id="PF03776">
    <property type="entry name" value="MinE"/>
    <property type="match status" value="1"/>
</dbReference>
<dbReference type="SUPFAM" id="SSF55229">
    <property type="entry name" value="Cell division protein MinE topological specificity domain"/>
    <property type="match status" value="1"/>
</dbReference>
<feature type="chain" id="PRO_0000298224" description="Cell division topological specificity factor">
    <location>
        <begin position="1"/>
        <end position="89"/>
    </location>
</feature>
<protein>
    <recommendedName>
        <fullName evidence="1">Cell division topological specificity factor</fullName>
    </recommendedName>
</protein>
<proteinExistence type="inferred from homology"/>
<sequence>MALLDFFLSRKKPTANIAKERLQIIVAERRRGDSEPHYLPDLKRDILAVICKYIQIDPEMLHVQFEQKGDDISVLELNVTLPETEETPK</sequence>
<organism>
    <name type="scientific">Yersinia pestis bv. Antiqua (strain Nepal516)</name>
    <dbReference type="NCBI Taxonomy" id="377628"/>
    <lineage>
        <taxon>Bacteria</taxon>
        <taxon>Pseudomonadati</taxon>
        <taxon>Pseudomonadota</taxon>
        <taxon>Gammaproteobacteria</taxon>
        <taxon>Enterobacterales</taxon>
        <taxon>Yersiniaceae</taxon>
        <taxon>Yersinia</taxon>
    </lineage>
</organism>
<comment type="function">
    <text evidence="1">Prevents the cell division inhibition by proteins MinC and MinD at internal division sites while permitting inhibition at polar sites. This ensures cell division at the proper site by restricting the formation of a division septum at the midpoint of the long axis of the cell.</text>
</comment>
<comment type="similarity">
    <text evidence="1">Belongs to the MinE family.</text>
</comment>
<accession>Q1CJE7</accession>
<accession>C4GSI4</accession>
<reference key="1">
    <citation type="journal article" date="2006" name="J. Bacteriol.">
        <title>Complete genome sequence of Yersinia pestis strains Antiqua and Nepal516: evidence of gene reduction in an emerging pathogen.</title>
        <authorList>
            <person name="Chain P.S.G."/>
            <person name="Hu P."/>
            <person name="Malfatti S.A."/>
            <person name="Radnedge L."/>
            <person name="Larimer F."/>
            <person name="Vergez L.M."/>
            <person name="Worsham P."/>
            <person name="Chu M.C."/>
            <person name="Andersen G.L."/>
        </authorList>
    </citation>
    <scope>NUCLEOTIDE SEQUENCE [LARGE SCALE GENOMIC DNA]</scope>
    <source>
        <strain>Nepal516</strain>
    </source>
</reference>
<reference key="2">
    <citation type="submission" date="2009-04" db="EMBL/GenBank/DDBJ databases">
        <title>Yersinia pestis Nepal516A whole genome shotgun sequencing project.</title>
        <authorList>
            <person name="Plunkett G. III"/>
            <person name="Anderson B.D."/>
            <person name="Baumler D.J."/>
            <person name="Burland V."/>
            <person name="Cabot E.L."/>
            <person name="Glasner J.D."/>
            <person name="Mau B."/>
            <person name="Neeno-Eckwall E."/>
            <person name="Perna N.T."/>
            <person name="Munk A.C."/>
            <person name="Tapia R."/>
            <person name="Green L.D."/>
            <person name="Rogers Y.C."/>
            <person name="Detter J.C."/>
            <person name="Bruce D.C."/>
            <person name="Brettin T.S."/>
        </authorList>
    </citation>
    <scope>NUCLEOTIDE SEQUENCE [LARGE SCALE GENOMIC DNA]</scope>
    <source>
        <strain>Nepal516</strain>
    </source>
</reference>
<name>MINE_YERPN</name>
<evidence type="ECO:0000255" key="1">
    <source>
        <dbReference type="HAMAP-Rule" id="MF_00262"/>
    </source>
</evidence>